<name>Y667_STAA3</name>
<gene>
    <name type="ordered locus">SAUSA300_0667</name>
</gene>
<evidence type="ECO:0000255" key="1">
    <source>
        <dbReference type="HAMAP-Rule" id="MF_00489"/>
    </source>
</evidence>
<sequence length="152" mass="17258">MTHIIIDGDACPVVDSIIDLTTETGIFVTIIRSFSHFSNQLYPPHVSTLYVDDGPDAVDYKIVQLSTKDDIVVTQDYGLASLLVDKVLIVMHHNGKIYNSKNIQQLLDKRYMNAQIRKQGGRHKGPPPFTKQDQKVFEQSLLKVIHRIKELD</sequence>
<dbReference type="EMBL" id="CP000255">
    <property type="protein sequence ID" value="ABD22073.1"/>
    <property type="molecule type" value="Genomic_DNA"/>
</dbReference>
<dbReference type="RefSeq" id="WP_000148828.1">
    <property type="nucleotide sequence ID" value="NZ_CP027476.1"/>
</dbReference>
<dbReference type="SMR" id="Q2FIV8"/>
<dbReference type="KEGG" id="saa:SAUSA300_0667"/>
<dbReference type="HOGENOM" id="CLU_106619_0_0_9"/>
<dbReference type="OMA" id="CPVKDEI"/>
<dbReference type="Proteomes" id="UP000001939">
    <property type="component" value="Chromosome"/>
</dbReference>
<dbReference type="HAMAP" id="MF_00489">
    <property type="entry name" value="UPF0178"/>
    <property type="match status" value="1"/>
</dbReference>
<dbReference type="InterPro" id="IPR003791">
    <property type="entry name" value="UPF0178"/>
</dbReference>
<dbReference type="NCBIfam" id="NF001095">
    <property type="entry name" value="PRK00124.1"/>
    <property type="match status" value="1"/>
</dbReference>
<dbReference type="PANTHER" id="PTHR35146">
    <property type="entry name" value="UPF0178 PROTEIN YAII"/>
    <property type="match status" value="1"/>
</dbReference>
<dbReference type="PANTHER" id="PTHR35146:SF1">
    <property type="entry name" value="UPF0178 PROTEIN YAII"/>
    <property type="match status" value="1"/>
</dbReference>
<dbReference type="Pfam" id="PF02639">
    <property type="entry name" value="DUF188"/>
    <property type="match status" value="1"/>
</dbReference>
<feature type="chain" id="PRO_0000241835" description="UPF0178 protein SAUSA300_0667">
    <location>
        <begin position="1"/>
        <end position="152"/>
    </location>
</feature>
<comment type="similarity">
    <text evidence="1">Belongs to the UPF0178 family.</text>
</comment>
<proteinExistence type="inferred from homology"/>
<protein>
    <recommendedName>
        <fullName evidence="1">UPF0178 protein SAUSA300_0667</fullName>
    </recommendedName>
</protein>
<accession>Q2FIV8</accession>
<reference key="1">
    <citation type="journal article" date="2006" name="Lancet">
        <title>Complete genome sequence of USA300, an epidemic clone of community-acquired meticillin-resistant Staphylococcus aureus.</title>
        <authorList>
            <person name="Diep B.A."/>
            <person name="Gill S.R."/>
            <person name="Chang R.F."/>
            <person name="Phan T.H."/>
            <person name="Chen J.H."/>
            <person name="Davidson M.G."/>
            <person name="Lin F."/>
            <person name="Lin J."/>
            <person name="Carleton H.A."/>
            <person name="Mongodin E.F."/>
            <person name="Sensabaugh G.F."/>
            <person name="Perdreau-Remington F."/>
        </authorList>
    </citation>
    <scope>NUCLEOTIDE SEQUENCE [LARGE SCALE GENOMIC DNA]</scope>
    <source>
        <strain>USA300</strain>
    </source>
</reference>
<organism>
    <name type="scientific">Staphylococcus aureus (strain USA300)</name>
    <dbReference type="NCBI Taxonomy" id="367830"/>
    <lineage>
        <taxon>Bacteria</taxon>
        <taxon>Bacillati</taxon>
        <taxon>Bacillota</taxon>
        <taxon>Bacilli</taxon>
        <taxon>Bacillales</taxon>
        <taxon>Staphylococcaceae</taxon>
        <taxon>Staphylococcus</taxon>
    </lineage>
</organism>